<comment type="catalytic activity">
    <reaction>
        <text>tRNA(Pro) + L-proline + ATP = L-prolyl-tRNA(Pro) + AMP + diphosphate</text>
        <dbReference type="Rhea" id="RHEA:14305"/>
        <dbReference type="Rhea" id="RHEA-COMP:9700"/>
        <dbReference type="Rhea" id="RHEA-COMP:9702"/>
        <dbReference type="ChEBI" id="CHEBI:30616"/>
        <dbReference type="ChEBI" id="CHEBI:33019"/>
        <dbReference type="ChEBI" id="CHEBI:60039"/>
        <dbReference type="ChEBI" id="CHEBI:78442"/>
        <dbReference type="ChEBI" id="CHEBI:78532"/>
        <dbReference type="ChEBI" id="CHEBI:456215"/>
        <dbReference type="EC" id="6.1.1.15"/>
    </reaction>
</comment>
<comment type="subcellular location">
    <subcellularLocation>
        <location evidence="2">Cytoplasm</location>
    </subcellularLocation>
</comment>
<comment type="similarity">
    <text evidence="3">Belongs to the class-II aminoacyl-tRNA synthetase family.</text>
</comment>
<reference key="1">
    <citation type="journal article" date="2002" name="Nature">
        <title>The genome sequence of Schizosaccharomyces pombe.</title>
        <authorList>
            <person name="Wood V."/>
            <person name="Gwilliam R."/>
            <person name="Rajandream M.A."/>
            <person name="Lyne M.H."/>
            <person name="Lyne R."/>
            <person name="Stewart A."/>
            <person name="Sgouros J.G."/>
            <person name="Peat N."/>
            <person name="Hayles J."/>
            <person name="Baker S.G."/>
            <person name="Basham D."/>
            <person name="Bowman S."/>
            <person name="Brooks K."/>
            <person name="Brown D."/>
            <person name="Brown S."/>
            <person name="Chillingworth T."/>
            <person name="Churcher C.M."/>
            <person name="Collins M."/>
            <person name="Connor R."/>
            <person name="Cronin A."/>
            <person name="Davis P."/>
            <person name="Feltwell T."/>
            <person name="Fraser A."/>
            <person name="Gentles S."/>
            <person name="Goble A."/>
            <person name="Hamlin N."/>
            <person name="Harris D.E."/>
            <person name="Hidalgo J."/>
            <person name="Hodgson G."/>
            <person name="Holroyd S."/>
            <person name="Hornsby T."/>
            <person name="Howarth S."/>
            <person name="Huckle E.J."/>
            <person name="Hunt S."/>
            <person name="Jagels K."/>
            <person name="James K.D."/>
            <person name="Jones L."/>
            <person name="Jones M."/>
            <person name="Leather S."/>
            <person name="McDonald S."/>
            <person name="McLean J."/>
            <person name="Mooney P."/>
            <person name="Moule S."/>
            <person name="Mungall K.L."/>
            <person name="Murphy L.D."/>
            <person name="Niblett D."/>
            <person name="Odell C."/>
            <person name="Oliver K."/>
            <person name="O'Neil S."/>
            <person name="Pearson D."/>
            <person name="Quail M.A."/>
            <person name="Rabbinowitsch E."/>
            <person name="Rutherford K.M."/>
            <person name="Rutter S."/>
            <person name="Saunders D."/>
            <person name="Seeger K."/>
            <person name="Sharp S."/>
            <person name="Skelton J."/>
            <person name="Simmonds M.N."/>
            <person name="Squares R."/>
            <person name="Squares S."/>
            <person name="Stevens K."/>
            <person name="Taylor K."/>
            <person name="Taylor R.G."/>
            <person name="Tivey A."/>
            <person name="Walsh S.V."/>
            <person name="Warren T."/>
            <person name="Whitehead S."/>
            <person name="Woodward J.R."/>
            <person name="Volckaert G."/>
            <person name="Aert R."/>
            <person name="Robben J."/>
            <person name="Grymonprez B."/>
            <person name="Weltjens I."/>
            <person name="Vanstreels E."/>
            <person name="Rieger M."/>
            <person name="Schaefer M."/>
            <person name="Mueller-Auer S."/>
            <person name="Gabel C."/>
            <person name="Fuchs M."/>
            <person name="Duesterhoeft A."/>
            <person name="Fritzc C."/>
            <person name="Holzer E."/>
            <person name="Moestl D."/>
            <person name="Hilbert H."/>
            <person name="Borzym K."/>
            <person name="Langer I."/>
            <person name="Beck A."/>
            <person name="Lehrach H."/>
            <person name="Reinhardt R."/>
            <person name="Pohl T.M."/>
            <person name="Eger P."/>
            <person name="Zimmermann W."/>
            <person name="Wedler H."/>
            <person name="Wambutt R."/>
            <person name="Purnelle B."/>
            <person name="Goffeau A."/>
            <person name="Cadieu E."/>
            <person name="Dreano S."/>
            <person name="Gloux S."/>
            <person name="Lelaure V."/>
            <person name="Mottier S."/>
            <person name="Galibert F."/>
            <person name="Aves S.J."/>
            <person name="Xiang Z."/>
            <person name="Hunt C."/>
            <person name="Moore K."/>
            <person name="Hurst S.M."/>
            <person name="Lucas M."/>
            <person name="Rochet M."/>
            <person name="Gaillardin C."/>
            <person name="Tallada V.A."/>
            <person name="Garzon A."/>
            <person name="Thode G."/>
            <person name="Daga R.R."/>
            <person name="Cruzado L."/>
            <person name="Jimenez J."/>
            <person name="Sanchez M."/>
            <person name="del Rey F."/>
            <person name="Benito J."/>
            <person name="Dominguez A."/>
            <person name="Revuelta J.L."/>
            <person name="Moreno S."/>
            <person name="Armstrong J."/>
            <person name="Forsburg S.L."/>
            <person name="Cerutti L."/>
            <person name="Lowe T."/>
            <person name="McCombie W.R."/>
            <person name="Paulsen I."/>
            <person name="Potashkin J."/>
            <person name="Shpakovski G.V."/>
            <person name="Ussery D."/>
            <person name="Barrell B.G."/>
            <person name="Nurse P."/>
        </authorList>
    </citation>
    <scope>NUCLEOTIDE SEQUENCE [LARGE SCALE GENOMIC DNA]</scope>
    <source>
        <strain>972 / ATCC 24843</strain>
    </source>
</reference>
<reference key="2">
    <citation type="journal article" date="2006" name="Nat. Biotechnol.">
        <title>ORFeome cloning and global analysis of protein localization in the fission yeast Schizosaccharomyces pombe.</title>
        <authorList>
            <person name="Matsuyama A."/>
            <person name="Arai R."/>
            <person name="Yashiroda Y."/>
            <person name="Shirai A."/>
            <person name="Kamata A."/>
            <person name="Sekido S."/>
            <person name="Kobayashi Y."/>
            <person name="Hashimoto A."/>
            <person name="Hamamoto M."/>
            <person name="Hiraoka Y."/>
            <person name="Horinouchi S."/>
            <person name="Yoshida M."/>
        </authorList>
    </citation>
    <scope>SUBCELLULAR LOCATION [LARGE SCALE ANALYSIS]</scope>
</reference>
<protein>
    <recommendedName>
        <fullName>Putative proline--tRNA ligase C19C7.06</fullName>
        <ecNumber>6.1.1.15</ecNumber>
    </recommendedName>
    <alternativeName>
        <fullName>Prolyl-tRNA synthetase</fullName>
        <shortName>ProRS</shortName>
    </alternativeName>
</protein>
<gene>
    <name type="primary">prs1</name>
    <name type="ORF">SPBC19C7.06</name>
</gene>
<dbReference type="EC" id="6.1.1.15"/>
<dbReference type="EMBL" id="CU329671">
    <property type="protein sequence ID" value="CAA19574.1"/>
    <property type="molecule type" value="Genomic_DNA"/>
</dbReference>
<dbReference type="PIR" id="T39812">
    <property type="entry name" value="T39812"/>
</dbReference>
<dbReference type="RefSeq" id="NP_596162.1">
    <property type="nucleotide sequence ID" value="NM_001022082.2"/>
</dbReference>
<dbReference type="SMR" id="O60155"/>
<dbReference type="BioGRID" id="276959">
    <property type="interactions" value="7"/>
</dbReference>
<dbReference type="FunCoup" id="O60155">
    <property type="interactions" value="120"/>
</dbReference>
<dbReference type="STRING" id="284812.O60155"/>
<dbReference type="iPTMnet" id="O60155"/>
<dbReference type="PaxDb" id="4896-SPBC19C7.06.1"/>
<dbReference type="EnsemblFungi" id="SPBC19C7.06.1">
    <property type="protein sequence ID" value="SPBC19C7.06.1:pep"/>
    <property type="gene ID" value="SPBC19C7.06"/>
</dbReference>
<dbReference type="GeneID" id="2540431"/>
<dbReference type="KEGG" id="spo:2540431"/>
<dbReference type="PomBase" id="SPBC19C7.06">
    <property type="gene designation" value="prs1"/>
</dbReference>
<dbReference type="VEuPathDB" id="FungiDB:SPBC19C7.06"/>
<dbReference type="eggNOG" id="KOG4163">
    <property type="taxonomic scope" value="Eukaryota"/>
</dbReference>
<dbReference type="HOGENOM" id="CLU_001882_4_1_1"/>
<dbReference type="InParanoid" id="O60155"/>
<dbReference type="OMA" id="EVYWVTH"/>
<dbReference type="PhylomeDB" id="O60155"/>
<dbReference type="PRO" id="PR:O60155"/>
<dbReference type="Proteomes" id="UP000002485">
    <property type="component" value="Chromosome II"/>
</dbReference>
<dbReference type="GO" id="GO:0017101">
    <property type="term" value="C:aminoacyl-tRNA synthetase multienzyme complex"/>
    <property type="evidence" value="ECO:0000318"/>
    <property type="project" value="GO_Central"/>
</dbReference>
<dbReference type="GO" id="GO:0005737">
    <property type="term" value="C:cytoplasm"/>
    <property type="evidence" value="ECO:0000318"/>
    <property type="project" value="GO_Central"/>
</dbReference>
<dbReference type="GO" id="GO:0005829">
    <property type="term" value="C:cytosol"/>
    <property type="evidence" value="ECO:0007005"/>
    <property type="project" value="PomBase"/>
</dbReference>
<dbReference type="GO" id="GO:0005524">
    <property type="term" value="F:ATP binding"/>
    <property type="evidence" value="ECO:0007669"/>
    <property type="project" value="UniProtKB-KW"/>
</dbReference>
<dbReference type="GO" id="GO:0043907">
    <property type="term" value="F:Cys-tRNA(Pro) deacylase activity"/>
    <property type="evidence" value="ECO:0000255"/>
    <property type="project" value="PomBase"/>
</dbReference>
<dbReference type="GO" id="GO:0004827">
    <property type="term" value="F:proline-tRNA ligase activity"/>
    <property type="evidence" value="ECO:0000318"/>
    <property type="project" value="GO_Central"/>
</dbReference>
<dbReference type="GO" id="GO:0002181">
    <property type="term" value="P:cytoplasmic translation"/>
    <property type="evidence" value="ECO:0000303"/>
    <property type="project" value="PomBase"/>
</dbReference>
<dbReference type="GO" id="GO:0006433">
    <property type="term" value="P:prolyl-tRNA aminoacylation"/>
    <property type="evidence" value="ECO:0000315"/>
    <property type="project" value="PomBase"/>
</dbReference>
<dbReference type="CDD" id="cd00862">
    <property type="entry name" value="ProRS_anticodon_zinc"/>
    <property type="match status" value="1"/>
</dbReference>
<dbReference type="CDD" id="cd00778">
    <property type="entry name" value="ProRS_core_arch_euk"/>
    <property type="match status" value="1"/>
</dbReference>
<dbReference type="FunFam" id="3.30.110.30:FF:000001">
    <property type="entry name" value="Bifunctional glutamate/proline--tRNA ligase"/>
    <property type="match status" value="1"/>
</dbReference>
<dbReference type="FunFam" id="3.30.930.10:FF:000007">
    <property type="entry name" value="Bifunctional glutamate/proline--tRNA ligase"/>
    <property type="match status" value="1"/>
</dbReference>
<dbReference type="FunFam" id="3.40.50.800:FF:000005">
    <property type="entry name" value="bifunctional glutamate/proline--tRNA ligase"/>
    <property type="match status" value="1"/>
</dbReference>
<dbReference type="FunFam" id="3.90.960.10:FF:000005">
    <property type="entry name" value="Putative prolyl-tRNA synthetase"/>
    <property type="match status" value="1"/>
</dbReference>
<dbReference type="Gene3D" id="3.40.50.800">
    <property type="entry name" value="Anticodon-binding domain"/>
    <property type="match status" value="1"/>
</dbReference>
<dbReference type="Gene3D" id="3.30.930.10">
    <property type="entry name" value="Bira Bifunctional Protein, Domain 2"/>
    <property type="match status" value="1"/>
</dbReference>
<dbReference type="Gene3D" id="3.30.110.30">
    <property type="entry name" value="C-terminal domain of ProRS"/>
    <property type="match status" value="1"/>
</dbReference>
<dbReference type="Gene3D" id="3.90.960.10">
    <property type="entry name" value="YbaK/aminoacyl-tRNA synthetase-associated domain"/>
    <property type="match status" value="1"/>
</dbReference>
<dbReference type="HAMAP" id="MF_01571">
    <property type="entry name" value="Pro_tRNA_synth_type3"/>
    <property type="match status" value="1"/>
</dbReference>
<dbReference type="InterPro" id="IPR002314">
    <property type="entry name" value="aa-tRNA-synt_IIb"/>
</dbReference>
<dbReference type="InterPro" id="IPR006195">
    <property type="entry name" value="aa-tRNA-synth_II"/>
</dbReference>
<dbReference type="InterPro" id="IPR045864">
    <property type="entry name" value="aa-tRNA-synth_II/BPL/LPL"/>
</dbReference>
<dbReference type="InterPro" id="IPR004154">
    <property type="entry name" value="Anticodon-bd"/>
</dbReference>
<dbReference type="InterPro" id="IPR036621">
    <property type="entry name" value="Anticodon-bd_dom_sf"/>
</dbReference>
<dbReference type="InterPro" id="IPR002316">
    <property type="entry name" value="Pro-tRNA-ligase_IIa"/>
</dbReference>
<dbReference type="InterPro" id="IPR004499">
    <property type="entry name" value="Pro-tRNA-ligase_IIa_arc-type"/>
</dbReference>
<dbReference type="InterPro" id="IPR016061">
    <property type="entry name" value="Pro-tRNA_ligase_II_C"/>
</dbReference>
<dbReference type="InterPro" id="IPR017449">
    <property type="entry name" value="Pro-tRNA_synth_II"/>
</dbReference>
<dbReference type="InterPro" id="IPR033721">
    <property type="entry name" value="ProRS_core_arch_euk"/>
</dbReference>
<dbReference type="InterPro" id="IPR036754">
    <property type="entry name" value="YbaK/aa-tRNA-synt-asso_dom_sf"/>
</dbReference>
<dbReference type="InterPro" id="IPR007214">
    <property type="entry name" value="YbaK/aa-tRNA-synth-assoc-dom"/>
</dbReference>
<dbReference type="NCBIfam" id="TIGR00408">
    <property type="entry name" value="proS_fam_I"/>
    <property type="match status" value="1"/>
</dbReference>
<dbReference type="PANTHER" id="PTHR43382:SF2">
    <property type="entry name" value="BIFUNCTIONAL GLUTAMATE_PROLINE--TRNA LIGASE"/>
    <property type="match status" value="1"/>
</dbReference>
<dbReference type="PANTHER" id="PTHR43382">
    <property type="entry name" value="PROLYL-TRNA SYNTHETASE"/>
    <property type="match status" value="1"/>
</dbReference>
<dbReference type="Pfam" id="PF03129">
    <property type="entry name" value="HGTP_anticodon"/>
    <property type="match status" value="1"/>
</dbReference>
<dbReference type="Pfam" id="PF09180">
    <property type="entry name" value="ProRS-C_1"/>
    <property type="match status" value="1"/>
</dbReference>
<dbReference type="Pfam" id="PF00587">
    <property type="entry name" value="tRNA-synt_2b"/>
    <property type="match status" value="1"/>
</dbReference>
<dbReference type="Pfam" id="PF04073">
    <property type="entry name" value="tRNA_edit"/>
    <property type="match status" value="1"/>
</dbReference>
<dbReference type="PRINTS" id="PR01046">
    <property type="entry name" value="TRNASYNTHPRO"/>
</dbReference>
<dbReference type="SMART" id="SM00946">
    <property type="entry name" value="ProRS-C_1"/>
    <property type="match status" value="1"/>
</dbReference>
<dbReference type="SUPFAM" id="SSF64586">
    <property type="entry name" value="C-terminal domain of ProRS"/>
    <property type="match status" value="1"/>
</dbReference>
<dbReference type="SUPFAM" id="SSF52954">
    <property type="entry name" value="Class II aaRS ABD-related"/>
    <property type="match status" value="1"/>
</dbReference>
<dbReference type="SUPFAM" id="SSF55681">
    <property type="entry name" value="Class II aaRS and biotin synthetases"/>
    <property type="match status" value="1"/>
</dbReference>
<dbReference type="SUPFAM" id="SSF55826">
    <property type="entry name" value="YbaK/ProRS associated domain"/>
    <property type="match status" value="1"/>
</dbReference>
<dbReference type="PROSITE" id="PS50862">
    <property type="entry name" value="AA_TRNA_LIGASE_II"/>
    <property type="match status" value="1"/>
</dbReference>
<feature type="chain" id="PRO_0000317133" description="Putative proline--tRNA ligase C19C7.06">
    <location>
        <begin position="1"/>
        <end position="716"/>
    </location>
</feature>
<feature type="region of interest" description="Disordered" evidence="1">
    <location>
        <begin position="655"/>
        <end position="675"/>
    </location>
</feature>
<organism>
    <name type="scientific">Schizosaccharomyces pombe (strain 972 / ATCC 24843)</name>
    <name type="common">Fission yeast</name>
    <dbReference type="NCBI Taxonomy" id="284812"/>
    <lineage>
        <taxon>Eukaryota</taxon>
        <taxon>Fungi</taxon>
        <taxon>Dikarya</taxon>
        <taxon>Ascomycota</taxon>
        <taxon>Taphrinomycotina</taxon>
        <taxon>Schizosaccharomycetes</taxon>
        <taxon>Schizosaccharomycetales</taxon>
        <taxon>Schizosaccharomycetaceae</taxon>
        <taxon>Schizosaccharomyces</taxon>
    </lineage>
</organism>
<sequence length="716" mass="78875">MSVDSLVSCLEQLITDDLKLVEHQEVSNGATWASALQSTKDVPSHALTKTIVLKPKTAKSQTVVPIILAALETTSTPSGIAAKAVGSKEARMAAADLVEEVFGIPPTDVGIFSVNKENASKVHVVLDAALIQHNGLLAFHPSSSAKTVFVSPAAVQTYLKSVGVNPIIVDFSAPGSATAPSKPAAQKKKAEPSKNDAAIENAALIGITVRKDADFPNWYQQVLTKSDMIEYYDISGCYILKPWSYSIWEAIQGWFDKEIKKLGVRNGYFPLFVSSKVLEKEKDHVEGFAPEVAWVTRAGTSELDEPIAIRPTSETVMYPYYAKWIRSHRDLPLKLNQWNSVVRWEFKNPQPFLRTREFLWQEGHTAHMTLEGATEEVHQILDLYARIYTDLLAVPVIKGVKSENEKFAGGMFTTTVEGYIPTTGRGIQGATSHCLGQNFSKMFNIVVEDPNAEIGPTGERPKLFVWQNSWGLSTRTIGVAVMVHGDDKGLKLPPAIALVQSVVVPCGITNKTTDQERNEIEGFCSKLADRLNAADIRTEADLRAYTPGYKFSHWEMKGVPLRLEYGPNDAKKNQVTAVRRDTFEKIPVPLNNLEKGVSDLLAKIQTNMYETAKAERDAHVVKVKEWADFVPALNKKNIVMIPWCNTTECEKEIKKNSARQVNGDEPEDEKAPSMGAKSLCIPLEQPSGEDAIIEGTTKCAGCGNLAKVWGLFGRSY</sequence>
<evidence type="ECO:0000256" key="1">
    <source>
        <dbReference type="SAM" id="MobiDB-lite"/>
    </source>
</evidence>
<evidence type="ECO:0000269" key="2">
    <source>
    </source>
</evidence>
<evidence type="ECO:0000305" key="3"/>
<name>PRS1_SCHPO</name>
<accession>O60155</accession>
<keyword id="KW-0030">Aminoacyl-tRNA synthetase</keyword>
<keyword id="KW-0067">ATP-binding</keyword>
<keyword id="KW-0963">Cytoplasm</keyword>
<keyword id="KW-0436">Ligase</keyword>
<keyword id="KW-0547">Nucleotide-binding</keyword>
<keyword id="KW-0648">Protein biosynthesis</keyword>
<keyword id="KW-1185">Reference proteome</keyword>
<proteinExistence type="inferred from homology"/>